<reference key="1">
    <citation type="submission" date="2009-02" db="EMBL/GenBank/DDBJ databases">
        <title>Vibrio splendidus str. LGP32 complete genome.</title>
        <authorList>
            <person name="Mazel D."/>
            <person name="Le Roux F."/>
        </authorList>
    </citation>
    <scope>NUCLEOTIDE SEQUENCE [LARGE SCALE GENOMIC DNA]</scope>
    <source>
        <strain>LGP32</strain>
    </source>
</reference>
<proteinExistence type="inferred from homology"/>
<accession>B7VJ08</accession>
<keyword id="KW-0378">Hydrolase</keyword>
<keyword id="KW-0441">Lipid A biosynthesis</keyword>
<keyword id="KW-0444">Lipid biosynthesis</keyword>
<keyword id="KW-0443">Lipid metabolism</keyword>
<keyword id="KW-0479">Metal-binding</keyword>
<keyword id="KW-0862">Zinc</keyword>
<comment type="function">
    <text evidence="1">Catalyzes the hydrolysis of UDP-3-O-myristoyl-N-acetylglucosamine to form UDP-3-O-myristoylglucosamine and acetate, the committed step in lipid A biosynthesis.</text>
</comment>
<comment type="catalytic activity">
    <reaction evidence="1">
        <text>a UDP-3-O-[(3R)-3-hydroxyacyl]-N-acetyl-alpha-D-glucosamine + H2O = a UDP-3-O-[(3R)-3-hydroxyacyl]-alpha-D-glucosamine + acetate</text>
        <dbReference type="Rhea" id="RHEA:67816"/>
        <dbReference type="ChEBI" id="CHEBI:15377"/>
        <dbReference type="ChEBI" id="CHEBI:30089"/>
        <dbReference type="ChEBI" id="CHEBI:137740"/>
        <dbReference type="ChEBI" id="CHEBI:173225"/>
        <dbReference type="EC" id="3.5.1.108"/>
    </reaction>
</comment>
<comment type="cofactor">
    <cofactor evidence="1">
        <name>Zn(2+)</name>
        <dbReference type="ChEBI" id="CHEBI:29105"/>
    </cofactor>
</comment>
<comment type="pathway">
    <text evidence="1">Glycolipid biosynthesis; lipid IV(A) biosynthesis; lipid IV(A) from (3R)-3-hydroxytetradecanoyl-[acyl-carrier-protein] and UDP-N-acetyl-alpha-D-glucosamine: step 2/6.</text>
</comment>
<comment type="similarity">
    <text evidence="1">Belongs to the LpxC family.</text>
</comment>
<evidence type="ECO:0000255" key="1">
    <source>
        <dbReference type="HAMAP-Rule" id="MF_00388"/>
    </source>
</evidence>
<feature type="chain" id="PRO_1000134405" description="UDP-3-O-acyl-N-acetylglucosamine deacetylase">
    <location>
        <begin position="1"/>
        <end position="305"/>
    </location>
</feature>
<feature type="active site" description="Proton donor" evidence="1">
    <location>
        <position position="265"/>
    </location>
</feature>
<feature type="binding site" evidence="1">
    <location>
        <position position="79"/>
    </location>
    <ligand>
        <name>Zn(2+)</name>
        <dbReference type="ChEBI" id="CHEBI:29105"/>
    </ligand>
</feature>
<feature type="binding site" evidence="1">
    <location>
        <position position="238"/>
    </location>
    <ligand>
        <name>Zn(2+)</name>
        <dbReference type="ChEBI" id="CHEBI:29105"/>
    </ligand>
</feature>
<feature type="binding site" evidence="1">
    <location>
        <position position="242"/>
    </location>
    <ligand>
        <name>Zn(2+)</name>
        <dbReference type="ChEBI" id="CHEBI:29105"/>
    </ligand>
</feature>
<organism>
    <name type="scientific">Vibrio atlanticus (strain LGP32)</name>
    <name type="common">Vibrio splendidus (strain Mel32)</name>
    <dbReference type="NCBI Taxonomy" id="575788"/>
    <lineage>
        <taxon>Bacteria</taxon>
        <taxon>Pseudomonadati</taxon>
        <taxon>Pseudomonadota</taxon>
        <taxon>Gammaproteobacteria</taxon>
        <taxon>Vibrionales</taxon>
        <taxon>Vibrionaceae</taxon>
        <taxon>Vibrio</taxon>
    </lineage>
</organism>
<sequence>MIRQRTLKEIVKTTGVGLHSGRKVTLTLRPAAANTGIVYRRTDVNPPVDFPADPASVRDTMLCTALVNDEGVRISTVEHLNAALAGMGIDNIIVEVDAPEIPIMDGSASPFVYLLQQAGVETLNAAKRFIRIKKPIRFEDGDKWAEFVPFNGFRMDFEIEFNHPAIESDEQHLLFDFSSQGFVKEISRARTFGFMRDIEYLQSQNLCLGGSFDCAIVLDEYRILNEEGLRFENEFVTHKVLDAIGDLYMCGHAIIGEFRAYKSGHGLNNQLLRAVLADAEAWEWATFEEEVGSPVAFAEPGMVLA</sequence>
<name>LPXC_VIBA3</name>
<dbReference type="EC" id="3.5.1.108" evidence="1"/>
<dbReference type="EMBL" id="FM954972">
    <property type="protein sequence ID" value="CAV17462.1"/>
    <property type="molecule type" value="Genomic_DNA"/>
</dbReference>
<dbReference type="SMR" id="B7VJ08"/>
<dbReference type="STRING" id="575788.VS_0455"/>
<dbReference type="KEGG" id="vsp:VS_0455"/>
<dbReference type="eggNOG" id="COG0774">
    <property type="taxonomic scope" value="Bacteria"/>
</dbReference>
<dbReference type="HOGENOM" id="CLU_046528_1_0_6"/>
<dbReference type="UniPathway" id="UPA00359">
    <property type="reaction ID" value="UER00478"/>
</dbReference>
<dbReference type="Proteomes" id="UP000009100">
    <property type="component" value="Chromosome 1"/>
</dbReference>
<dbReference type="GO" id="GO:0016020">
    <property type="term" value="C:membrane"/>
    <property type="evidence" value="ECO:0007669"/>
    <property type="project" value="GOC"/>
</dbReference>
<dbReference type="GO" id="GO:0046872">
    <property type="term" value="F:metal ion binding"/>
    <property type="evidence" value="ECO:0007669"/>
    <property type="project" value="UniProtKB-KW"/>
</dbReference>
<dbReference type="GO" id="GO:0103117">
    <property type="term" value="F:UDP-3-O-acyl-N-acetylglucosamine deacetylase activity"/>
    <property type="evidence" value="ECO:0007669"/>
    <property type="project" value="UniProtKB-UniRule"/>
</dbReference>
<dbReference type="GO" id="GO:0009245">
    <property type="term" value="P:lipid A biosynthetic process"/>
    <property type="evidence" value="ECO:0007669"/>
    <property type="project" value="UniProtKB-UniRule"/>
</dbReference>
<dbReference type="FunFam" id="3.30.1700.10:FF:000001">
    <property type="entry name" value="UDP-3-O-acyl-N-acetylglucosamine deacetylase"/>
    <property type="match status" value="1"/>
</dbReference>
<dbReference type="FunFam" id="3.30.230.20:FF:000001">
    <property type="entry name" value="UDP-3-O-acyl-N-acetylglucosamine deacetylase"/>
    <property type="match status" value="1"/>
</dbReference>
<dbReference type="Gene3D" id="3.30.230.20">
    <property type="entry name" value="lpxc deacetylase, domain 1"/>
    <property type="match status" value="1"/>
</dbReference>
<dbReference type="Gene3D" id="3.30.1700.10">
    <property type="entry name" value="lpxc deacetylase, domain 2"/>
    <property type="match status" value="1"/>
</dbReference>
<dbReference type="HAMAP" id="MF_00388">
    <property type="entry name" value="LpxC"/>
    <property type="match status" value="1"/>
</dbReference>
<dbReference type="InterPro" id="IPR020568">
    <property type="entry name" value="Ribosomal_Su5_D2-typ_SF"/>
</dbReference>
<dbReference type="InterPro" id="IPR004463">
    <property type="entry name" value="UDP-acyl_GlcNac_deAcase"/>
</dbReference>
<dbReference type="InterPro" id="IPR011334">
    <property type="entry name" value="UDP-acyl_GlcNac_deAcase_C"/>
</dbReference>
<dbReference type="InterPro" id="IPR015870">
    <property type="entry name" value="UDP-acyl_N-AcGlcN_deAcase_N"/>
</dbReference>
<dbReference type="NCBIfam" id="TIGR00325">
    <property type="entry name" value="lpxC"/>
    <property type="match status" value="1"/>
</dbReference>
<dbReference type="PANTHER" id="PTHR33694">
    <property type="entry name" value="UDP-3-O-ACYL-N-ACETYLGLUCOSAMINE DEACETYLASE 1, MITOCHONDRIAL-RELATED"/>
    <property type="match status" value="1"/>
</dbReference>
<dbReference type="PANTHER" id="PTHR33694:SF1">
    <property type="entry name" value="UDP-3-O-ACYL-N-ACETYLGLUCOSAMINE DEACETYLASE 1, MITOCHONDRIAL-RELATED"/>
    <property type="match status" value="1"/>
</dbReference>
<dbReference type="Pfam" id="PF03331">
    <property type="entry name" value="LpxC"/>
    <property type="match status" value="1"/>
</dbReference>
<dbReference type="SUPFAM" id="SSF54211">
    <property type="entry name" value="Ribosomal protein S5 domain 2-like"/>
    <property type="match status" value="2"/>
</dbReference>
<protein>
    <recommendedName>
        <fullName evidence="1">UDP-3-O-acyl-N-acetylglucosamine deacetylase</fullName>
        <shortName evidence="1">UDP-3-O-acyl-GlcNAc deacetylase</shortName>
        <ecNumber evidence="1">3.5.1.108</ecNumber>
    </recommendedName>
    <alternativeName>
        <fullName evidence="1">UDP-3-O-[R-3-hydroxymyristoyl]-N-acetylglucosamine deacetylase</fullName>
    </alternativeName>
</protein>
<gene>
    <name evidence="1" type="primary">lpxC</name>
    <name type="ordered locus">VS_0455</name>
</gene>